<proteinExistence type="inferred from homology"/>
<gene>
    <name type="ORF">AN1270</name>
</gene>
<protein>
    <recommendedName>
        <fullName evidence="1">Eukaryotic translation initiation factor 3 subunit H</fullName>
        <shortName evidence="1">eIF3h</shortName>
    </recommendedName>
</protein>
<feature type="chain" id="PRO_0000365207" description="Eukaryotic translation initiation factor 3 subunit H">
    <location>
        <begin position="1"/>
        <end position="366"/>
    </location>
</feature>
<feature type="domain" description="MPN" evidence="2">
    <location>
        <begin position="12"/>
        <end position="161"/>
    </location>
</feature>
<organism>
    <name type="scientific">Emericella nidulans (strain FGSC A4 / ATCC 38163 / CBS 112.46 / NRRL 194 / M139)</name>
    <name type="common">Aspergillus nidulans</name>
    <dbReference type="NCBI Taxonomy" id="227321"/>
    <lineage>
        <taxon>Eukaryota</taxon>
        <taxon>Fungi</taxon>
        <taxon>Dikarya</taxon>
        <taxon>Ascomycota</taxon>
        <taxon>Pezizomycotina</taxon>
        <taxon>Eurotiomycetes</taxon>
        <taxon>Eurotiomycetidae</taxon>
        <taxon>Eurotiales</taxon>
        <taxon>Aspergillaceae</taxon>
        <taxon>Aspergillus</taxon>
        <taxon>Aspergillus subgen. Nidulantes</taxon>
    </lineage>
</organism>
<evidence type="ECO:0000255" key="1">
    <source>
        <dbReference type="HAMAP-Rule" id="MF_03007"/>
    </source>
</evidence>
<evidence type="ECO:0000255" key="2">
    <source>
        <dbReference type="PROSITE-ProRule" id="PRU01182"/>
    </source>
</evidence>
<evidence type="ECO:0000305" key="3"/>
<keyword id="KW-0963">Cytoplasm</keyword>
<keyword id="KW-0396">Initiation factor</keyword>
<keyword id="KW-0648">Protein biosynthesis</keyword>
<keyword id="KW-1185">Reference proteome</keyword>
<reference key="1">
    <citation type="journal article" date="2005" name="Nature">
        <title>Sequencing of Aspergillus nidulans and comparative analysis with A. fumigatus and A. oryzae.</title>
        <authorList>
            <person name="Galagan J.E."/>
            <person name="Calvo S.E."/>
            <person name="Cuomo C."/>
            <person name="Ma L.-J."/>
            <person name="Wortman J.R."/>
            <person name="Batzoglou S."/>
            <person name="Lee S.-I."/>
            <person name="Bastuerkmen M."/>
            <person name="Spevak C.C."/>
            <person name="Clutterbuck J."/>
            <person name="Kapitonov V."/>
            <person name="Jurka J."/>
            <person name="Scazzocchio C."/>
            <person name="Farman M.L."/>
            <person name="Butler J."/>
            <person name="Purcell S."/>
            <person name="Harris S."/>
            <person name="Braus G.H."/>
            <person name="Draht O."/>
            <person name="Busch S."/>
            <person name="D'Enfert C."/>
            <person name="Bouchier C."/>
            <person name="Goldman G.H."/>
            <person name="Bell-Pedersen D."/>
            <person name="Griffiths-Jones S."/>
            <person name="Doonan J.H."/>
            <person name="Yu J."/>
            <person name="Vienken K."/>
            <person name="Pain A."/>
            <person name="Freitag M."/>
            <person name="Selker E.U."/>
            <person name="Archer D.B."/>
            <person name="Penalva M.A."/>
            <person name="Oakley B.R."/>
            <person name="Momany M."/>
            <person name="Tanaka T."/>
            <person name="Kumagai T."/>
            <person name="Asai K."/>
            <person name="Machida M."/>
            <person name="Nierman W.C."/>
            <person name="Denning D.W."/>
            <person name="Caddick M.X."/>
            <person name="Hynes M."/>
            <person name="Paoletti M."/>
            <person name="Fischer R."/>
            <person name="Miller B.L."/>
            <person name="Dyer P.S."/>
            <person name="Sachs M.S."/>
            <person name="Osmani S.A."/>
            <person name="Birren B.W."/>
        </authorList>
    </citation>
    <scope>NUCLEOTIDE SEQUENCE [LARGE SCALE GENOMIC DNA]</scope>
    <source>
        <strain>FGSC A4 / ATCC 38163 / CBS 112.46 / NRRL 194 / M139</strain>
    </source>
</reference>
<reference key="2">
    <citation type="journal article" date="2009" name="Fungal Genet. Biol.">
        <title>The 2008 update of the Aspergillus nidulans genome annotation: a community effort.</title>
        <authorList>
            <person name="Wortman J.R."/>
            <person name="Gilsenan J.M."/>
            <person name="Joardar V."/>
            <person name="Deegan J."/>
            <person name="Clutterbuck J."/>
            <person name="Andersen M.R."/>
            <person name="Archer D."/>
            <person name="Bencina M."/>
            <person name="Braus G."/>
            <person name="Coutinho P."/>
            <person name="von Dohren H."/>
            <person name="Doonan J."/>
            <person name="Driessen A.J."/>
            <person name="Durek P."/>
            <person name="Espeso E."/>
            <person name="Fekete E."/>
            <person name="Flipphi M."/>
            <person name="Estrada C.G."/>
            <person name="Geysens S."/>
            <person name="Goldman G."/>
            <person name="de Groot P.W."/>
            <person name="Hansen K."/>
            <person name="Harris S.D."/>
            <person name="Heinekamp T."/>
            <person name="Helmstaedt K."/>
            <person name="Henrissat B."/>
            <person name="Hofmann G."/>
            <person name="Homan T."/>
            <person name="Horio T."/>
            <person name="Horiuchi H."/>
            <person name="James S."/>
            <person name="Jones M."/>
            <person name="Karaffa L."/>
            <person name="Karanyi Z."/>
            <person name="Kato M."/>
            <person name="Keller N."/>
            <person name="Kelly D.E."/>
            <person name="Kiel J.A."/>
            <person name="Kim J.M."/>
            <person name="van der Klei I.J."/>
            <person name="Klis F.M."/>
            <person name="Kovalchuk A."/>
            <person name="Krasevec N."/>
            <person name="Kubicek C.P."/>
            <person name="Liu B."/>
            <person name="Maccabe A."/>
            <person name="Meyer V."/>
            <person name="Mirabito P."/>
            <person name="Miskei M."/>
            <person name="Mos M."/>
            <person name="Mullins J."/>
            <person name="Nelson D.R."/>
            <person name="Nielsen J."/>
            <person name="Oakley B.R."/>
            <person name="Osmani S.A."/>
            <person name="Pakula T."/>
            <person name="Paszewski A."/>
            <person name="Paulsen I."/>
            <person name="Pilsyk S."/>
            <person name="Pocsi I."/>
            <person name="Punt P.J."/>
            <person name="Ram A.F."/>
            <person name="Ren Q."/>
            <person name="Robellet X."/>
            <person name="Robson G."/>
            <person name="Seiboth B."/>
            <person name="van Solingen P."/>
            <person name="Specht T."/>
            <person name="Sun J."/>
            <person name="Taheri-Talesh N."/>
            <person name="Takeshita N."/>
            <person name="Ussery D."/>
            <person name="vanKuyk P.A."/>
            <person name="Visser H."/>
            <person name="van de Vondervoort P.J."/>
            <person name="de Vries R.P."/>
            <person name="Walton J."/>
            <person name="Xiang X."/>
            <person name="Xiong Y."/>
            <person name="Zeng A.P."/>
            <person name="Brandt B.W."/>
            <person name="Cornell M.J."/>
            <person name="van den Hondel C.A."/>
            <person name="Visser J."/>
            <person name="Oliver S.G."/>
            <person name="Turner G."/>
        </authorList>
    </citation>
    <scope>GENOME REANNOTATION</scope>
    <source>
        <strain>FGSC A4 / ATCC 38163 / CBS 112.46 / NRRL 194 / M139</strain>
    </source>
</reference>
<sequence length="366" mass="41104">MAEKEVTPLTAVKVEALVVMKIIKHCSQVFPTTATGSIVGMDVDGVLEITNTFPFPVVEVPPESHFDNAAPNPAAAAPRAKANTVYQAEMIRMLREVNVDANNVGWYTSANMGNFVNMNVIENQFFYQKEMNERTVALVHDPSRSAQGSLSLRAFRLSPKFMAAFKDNKFTSDELQKSNLKYQDILVELPVEIHNSHLITSFIHQLQNQTQATPAEIPTSLATLESSPFAKQTILAPNFDNLSLSIDPFLEKNCDLLLDSIETHHTETSNFQYYQRSLAREQAKITAWQAKRKAENATRATLKQPPLPEDEWQRLFKLPQEPSRLDSMLNSRQVEQYARQIDSFVSSTTGKMFAVKGNLLPSEIAK</sequence>
<comment type="function">
    <text evidence="1">Component of the eukaryotic translation initiation factor 3 (eIF-3) complex, which is involved in protein synthesis of a specialized repertoire of mRNAs and, together with other initiation factors, stimulates binding of mRNA and methionyl-tRNAi to the 40S ribosome. The eIF-3 complex specifically targets and initiates translation of a subset of mRNAs involved in cell proliferation.</text>
</comment>
<comment type="subunit">
    <text evidence="1">Component of the eukaryotic translation initiation factor 3 (eIF-3) complex.</text>
</comment>
<comment type="subcellular location">
    <subcellularLocation>
        <location evidence="1">Cytoplasm</location>
    </subcellularLocation>
</comment>
<comment type="similarity">
    <text evidence="1">Belongs to the eIF-3 subunit H family.</text>
</comment>
<comment type="sequence caution" evidence="3">
    <conflict type="erroneous gene model prediction">
        <sequence resource="EMBL-CDS" id="EAA65863"/>
    </conflict>
</comment>
<accession>Q5BDW0</accession>
<accession>C8VSG9</accession>
<dbReference type="EMBL" id="AACD01000017">
    <property type="protein sequence ID" value="EAA65863.1"/>
    <property type="status" value="ALT_SEQ"/>
    <property type="molecule type" value="Genomic_DNA"/>
</dbReference>
<dbReference type="EMBL" id="BN001308">
    <property type="protein sequence ID" value="CBF87819.1"/>
    <property type="molecule type" value="Genomic_DNA"/>
</dbReference>
<dbReference type="RefSeq" id="XP_658874.1">
    <property type="nucleotide sequence ID" value="XM_653782.1"/>
</dbReference>
<dbReference type="SMR" id="Q5BDW0"/>
<dbReference type="STRING" id="227321.Q5BDW0"/>
<dbReference type="EnsemblFungi" id="CBF87819">
    <property type="protein sequence ID" value="CBF87819"/>
    <property type="gene ID" value="ANIA_01270"/>
</dbReference>
<dbReference type="KEGG" id="ani:ANIA_01270"/>
<dbReference type="VEuPathDB" id="FungiDB:AN1270"/>
<dbReference type="eggNOG" id="KOG1560">
    <property type="taxonomic scope" value="Eukaryota"/>
</dbReference>
<dbReference type="HOGENOM" id="CLU_044094_1_0_1"/>
<dbReference type="InParanoid" id="Q5BDW0"/>
<dbReference type="OMA" id="WYQSTYF"/>
<dbReference type="OrthoDB" id="10265695at2759"/>
<dbReference type="Proteomes" id="UP000000560">
    <property type="component" value="Chromosome VIII"/>
</dbReference>
<dbReference type="GO" id="GO:0016282">
    <property type="term" value="C:eukaryotic 43S preinitiation complex"/>
    <property type="evidence" value="ECO:0000318"/>
    <property type="project" value="GO_Central"/>
</dbReference>
<dbReference type="GO" id="GO:0033290">
    <property type="term" value="C:eukaryotic 48S preinitiation complex"/>
    <property type="evidence" value="ECO:0007669"/>
    <property type="project" value="UniProtKB-UniRule"/>
</dbReference>
<dbReference type="GO" id="GO:0005852">
    <property type="term" value="C:eukaryotic translation initiation factor 3 complex"/>
    <property type="evidence" value="ECO:0000318"/>
    <property type="project" value="GO_Central"/>
</dbReference>
<dbReference type="GO" id="GO:0008237">
    <property type="term" value="F:metallopeptidase activity"/>
    <property type="evidence" value="ECO:0000318"/>
    <property type="project" value="GO_Central"/>
</dbReference>
<dbReference type="GO" id="GO:0003743">
    <property type="term" value="F:translation initiation factor activity"/>
    <property type="evidence" value="ECO:0007669"/>
    <property type="project" value="UniProtKB-UniRule"/>
</dbReference>
<dbReference type="GO" id="GO:0001732">
    <property type="term" value="P:formation of cytoplasmic translation initiation complex"/>
    <property type="evidence" value="ECO:0007669"/>
    <property type="project" value="UniProtKB-UniRule"/>
</dbReference>
<dbReference type="GO" id="GO:0006413">
    <property type="term" value="P:translational initiation"/>
    <property type="evidence" value="ECO:0000318"/>
    <property type="project" value="GO_Central"/>
</dbReference>
<dbReference type="CDD" id="cd08065">
    <property type="entry name" value="MPN_eIF3h"/>
    <property type="match status" value="1"/>
</dbReference>
<dbReference type="FunFam" id="3.40.140.10:FF:000052">
    <property type="entry name" value="Eukaryotic translation initiation factor 3 subunit H"/>
    <property type="match status" value="1"/>
</dbReference>
<dbReference type="Gene3D" id="3.40.140.10">
    <property type="entry name" value="Cytidine Deaminase, domain 2"/>
    <property type="match status" value="1"/>
</dbReference>
<dbReference type="HAMAP" id="MF_03007">
    <property type="entry name" value="eIF3h"/>
    <property type="match status" value="1"/>
</dbReference>
<dbReference type="InterPro" id="IPR027524">
    <property type="entry name" value="eIF3h"/>
</dbReference>
<dbReference type="InterPro" id="IPR045810">
    <property type="entry name" value="eIF3h_C"/>
</dbReference>
<dbReference type="InterPro" id="IPR000555">
    <property type="entry name" value="JAMM/MPN+_dom"/>
</dbReference>
<dbReference type="InterPro" id="IPR050242">
    <property type="entry name" value="JAMM_MPN+_peptidase_M67A"/>
</dbReference>
<dbReference type="InterPro" id="IPR037518">
    <property type="entry name" value="MPN"/>
</dbReference>
<dbReference type="PANTHER" id="PTHR10410">
    <property type="entry name" value="EUKARYOTIC TRANSLATION INITIATION FACTOR 3 -RELATED"/>
    <property type="match status" value="1"/>
</dbReference>
<dbReference type="Pfam" id="PF19445">
    <property type="entry name" value="eIF3h_C"/>
    <property type="match status" value="2"/>
</dbReference>
<dbReference type="Pfam" id="PF01398">
    <property type="entry name" value="JAB"/>
    <property type="match status" value="1"/>
</dbReference>
<dbReference type="SMART" id="SM00232">
    <property type="entry name" value="JAB_MPN"/>
    <property type="match status" value="1"/>
</dbReference>
<dbReference type="PROSITE" id="PS50249">
    <property type="entry name" value="MPN"/>
    <property type="match status" value="1"/>
</dbReference>
<name>EIF3H_EMENI</name>